<organism>
    <name type="scientific">Schizosaccharomyces pombe (strain 972 / ATCC 24843)</name>
    <name type="common">Fission yeast</name>
    <dbReference type="NCBI Taxonomy" id="284812"/>
    <lineage>
        <taxon>Eukaryota</taxon>
        <taxon>Fungi</taxon>
        <taxon>Dikarya</taxon>
        <taxon>Ascomycota</taxon>
        <taxon>Taphrinomycotina</taxon>
        <taxon>Schizosaccharomycetes</taxon>
        <taxon>Schizosaccharomycetales</taxon>
        <taxon>Schizosaccharomycetaceae</taxon>
        <taxon>Schizosaccharomyces</taxon>
    </lineage>
</organism>
<comment type="function">
    <text evidence="1">Probably facilitates nickel incorporation.</text>
</comment>
<comment type="subcellular location">
    <subcellularLocation>
        <location evidence="3">Cytoplasm</location>
    </subcellularLocation>
    <subcellularLocation>
        <location evidence="3">Nucleus</location>
    </subcellularLocation>
</comment>
<comment type="similarity">
    <text evidence="4">Belongs to the SIMIBI class G3E GTPase family. UreG subfamily.</text>
</comment>
<feature type="chain" id="PRO_0000373859" description="Uncharacterized urease accessory protein ureG-like">
    <location>
        <begin position="1"/>
        <end position="286"/>
    </location>
</feature>
<feature type="region of interest" description="Disordered" evidence="2">
    <location>
        <begin position="1"/>
        <end position="47"/>
    </location>
</feature>
<feature type="compositionally biased region" description="Basic and acidic residues" evidence="2">
    <location>
        <begin position="9"/>
        <end position="26"/>
    </location>
</feature>
<feature type="binding site" evidence="1">
    <location>
        <begin position="93"/>
        <end position="100"/>
    </location>
    <ligand>
        <name>GTP</name>
        <dbReference type="ChEBI" id="CHEBI:37565"/>
    </ligand>
</feature>
<gene>
    <name type="ORF">SPCPB16A4.05c</name>
</gene>
<dbReference type="EMBL" id="CU329672">
    <property type="protein sequence ID" value="CAC39324.1"/>
    <property type="molecule type" value="Genomic_DNA"/>
</dbReference>
<dbReference type="SMR" id="Q96WV0"/>
<dbReference type="BioGRID" id="275389">
    <property type="interactions" value="13"/>
</dbReference>
<dbReference type="FunCoup" id="Q96WV0">
    <property type="interactions" value="18"/>
</dbReference>
<dbReference type="STRING" id="284812.Q96WV0"/>
<dbReference type="iPTMnet" id="Q96WV0"/>
<dbReference type="PaxDb" id="4896-SPCPB16A4.05c.1"/>
<dbReference type="EnsemblFungi" id="SPCPB16A4.05c.1">
    <property type="protein sequence ID" value="SPCPB16A4.05c.1:pep"/>
    <property type="gene ID" value="SPCPB16A4.05c"/>
</dbReference>
<dbReference type="KEGG" id="spo:2538808"/>
<dbReference type="PomBase" id="SPCPB16A4.05c"/>
<dbReference type="VEuPathDB" id="FungiDB:SPCPB16A4.05c"/>
<dbReference type="eggNOG" id="ENOG502QR6E">
    <property type="taxonomic scope" value="Eukaryota"/>
</dbReference>
<dbReference type="HOGENOM" id="CLU_072144_0_0_1"/>
<dbReference type="InParanoid" id="Q96WV0"/>
<dbReference type="OMA" id="KMRGDKP"/>
<dbReference type="PhylomeDB" id="Q96WV0"/>
<dbReference type="PRO" id="PR:Q96WV0"/>
<dbReference type="Proteomes" id="UP000002485">
    <property type="component" value="Chromosome III"/>
</dbReference>
<dbReference type="GO" id="GO:0005829">
    <property type="term" value="C:cytosol"/>
    <property type="evidence" value="ECO:0007005"/>
    <property type="project" value="PomBase"/>
</dbReference>
<dbReference type="GO" id="GO:0005634">
    <property type="term" value="C:nucleus"/>
    <property type="evidence" value="ECO:0007005"/>
    <property type="project" value="PomBase"/>
</dbReference>
<dbReference type="GO" id="GO:0005525">
    <property type="term" value="F:GTP binding"/>
    <property type="evidence" value="ECO:0007669"/>
    <property type="project" value="UniProtKB-KW"/>
</dbReference>
<dbReference type="GO" id="GO:0003924">
    <property type="term" value="F:GTPase activity"/>
    <property type="evidence" value="ECO:0007669"/>
    <property type="project" value="InterPro"/>
</dbReference>
<dbReference type="GO" id="GO:0016151">
    <property type="term" value="F:nickel cation binding"/>
    <property type="evidence" value="ECO:0007669"/>
    <property type="project" value="InterPro"/>
</dbReference>
<dbReference type="GO" id="GO:0043419">
    <property type="term" value="P:urea catabolic process"/>
    <property type="evidence" value="ECO:0007669"/>
    <property type="project" value="InterPro"/>
</dbReference>
<dbReference type="GO" id="GO:0019627">
    <property type="term" value="P:urea metabolic process"/>
    <property type="evidence" value="ECO:0000316"/>
    <property type="project" value="PomBase"/>
</dbReference>
<dbReference type="CDD" id="cd05540">
    <property type="entry name" value="UreG"/>
    <property type="match status" value="1"/>
</dbReference>
<dbReference type="FunFam" id="3.40.50.300:FF:000208">
    <property type="entry name" value="Urease accessory protein UreG"/>
    <property type="match status" value="1"/>
</dbReference>
<dbReference type="Gene3D" id="3.40.50.300">
    <property type="entry name" value="P-loop containing nucleotide triphosphate hydrolases"/>
    <property type="match status" value="1"/>
</dbReference>
<dbReference type="HAMAP" id="MF_01389">
    <property type="entry name" value="UreG"/>
    <property type="match status" value="1"/>
</dbReference>
<dbReference type="InterPro" id="IPR003495">
    <property type="entry name" value="CobW/HypB/UreG_nucleotide-bd"/>
</dbReference>
<dbReference type="InterPro" id="IPR027417">
    <property type="entry name" value="P-loop_NTPase"/>
</dbReference>
<dbReference type="InterPro" id="IPR004400">
    <property type="entry name" value="UreG"/>
</dbReference>
<dbReference type="NCBIfam" id="TIGR00101">
    <property type="entry name" value="ureG"/>
    <property type="match status" value="1"/>
</dbReference>
<dbReference type="PANTHER" id="PTHR31715">
    <property type="entry name" value="UREASE ACCESSORY PROTEIN G"/>
    <property type="match status" value="1"/>
</dbReference>
<dbReference type="PANTHER" id="PTHR31715:SF0">
    <property type="entry name" value="UREASE ACCESSORY PROTEIN G"/>
    <property type="match status" value="1"/>
</dbReference>
<dbReference type="Pfam" id="PF02492">
    <property type="entry name" value="cobW"/>
    <property type="match status" value="1"/>
</dbReference>
<dbReference type="SUPFAM" id="SSF52540">
    <property type="entry name" value="P-loop containing nucleoside triphosphate hydrolases"/>
    <property type="match status" value="1"/>
</dbReference>
<accession>Q96WV0</accession>
<keyword id="KW-0143">Chaperone</keyword>
<keyword id="KW-0963">Cytoplasm</keyword>
<keyword id="KW-0342">GTP-binding</keyword>
<keyword id="KW-0996">Nickel insertion</keyword>
<keyword id="KW-0547">Nucleotide-binding</keyword>
<keyword id="KW-0539">Nucleus</keyword>
<keyword id="KW-1185">Reference proteome</keyword>
<proteinExistence type="inferred from homology"/>
<sequence>MAIPFLHKGGSDDSTHHHTHDYDHHNHDHHGHDHHSHDSSSNSSSEAARLQFIQEHGHSHDAMETPGSYLKRELPQFNHRDFSRRAFTIGVGGPVGSGKTALLLQLCRLLGEKYSIGVVTNDIFTREDQEFLIRNKALPEERIRAIETGGCPHAAIREDVSGNLVALEELQSEFNTELLLVESGGDNLAANYSRDLADFIIYVIDVSGGDKIPRKGGPGITESDLLIINKTDLAKLVGADLSVMDRDAKKIRENGPIVFAQVKNQVGMDEITELILGAAKSAGALK</sequence>
<evidence type="ECO:0000250" key="1"/>
<evidence type="ECO:0000256" key="2">
    <source>
        <dbReference type="SAM" id="MobiDB-lite"/>
    </source>
</evidence>
<evidence type="ECO:0000269" key="3">
    <source>
    </source>
</evidence>
<evidence type="ECO:0000305" key="4"/>
<reference key="1">
    <citation type="journal article" date="2002" name="Nature">
        <title>The genome sequence of Schizosaccharomyces pombe.</title>
        <authorList>
            <person name="Wood V."/>
            <person name="Gwilliam R."/>
            <person name="Rajandream M.A."/>
            <person name="Lyne M.H."/>
            <person name="Lyne R."/>
            <person name="Stewart A."/>
            <person name="Sgouros J.G."/>
            <person name="Peat N."/>
            <person name="Hayles J."/>
            <person name="Baker S.G."/>
            <person name="Basham D."/>
            <person name="Bowman S."/>
            <person name="Brooks K."/>
            <person name="Brown D."/>
            <person name="Brown S."/>
            <person name="Chillingworth T."/>
            <person name="Churcher C.M."/>
            <person name="Collins M."/>
            <person name="Connor R."/>
            <person name="Cronin A."/>
            <person name="Davis P."/>
            <person name="Feltwell T."/>
            <person name="Fraser A."/>
            <person name="Gentles S."/>
            <person name="Goble A."/>
            <person name="Hamlin N."/>
            <person name="Harris D.E."/>
            <person name="Hidalgo J."/>
            <person name="Hodgson G."/>
            <person name="Holroyd S."/>
            <person name="Hornsby T."/>
            <person name="Howarth S."/>
            <person name="Huckle E.J."/>
            <person name="Hunt S."/>
            <person name="Jagels K."/>
            <person name="James K.D."/>
            <person name="Jones L."/>
            <person name="Jones M."/>
            <person name="Leather S."/>
            <person name="McDonald S."/>
            <person name="McLean J."/>
            <person name="Mooney P."/>
            <person name="Moule S."/>
            <person name="Mungall K.L."/>
            <person name="Murphy L.D."/>
            <person name="Niblett D."/>
            <person name="Odell C."/>
            <person name="Oliver K."/>
            <person name="O'Neil S."/>
            <person name="Pearson D."/>
            <person name="Quail M.A."/>
            <person name="Rabbinowitsch E."/>
            <person name="Rutherford K.M."/>
            <person name="Rutter S."/>
            <person name="Saunders D."/>
            <person name="Seeger K."/>
            <person name="Sharp S."/>
            <person name="Skelton J."/>
            <person name="Simmonds M.N."/>
            <person name="Squares R."/>
            <person name="Squares S."/>
            <person name="Stevens K."/>
            <person name="Taylor K."/>
            <person name="Taylor R.G."/>
            <person name="Tivey A."/>
            <person name="Walsh S.V."/>
            <person name="Warren T."/>
            <person name="Whitehead S."/>
            <person name="Woodward J.R."/>
            <person name="Volckaert G."/>
            <person name="Aert R."/>
            <person name="Robben J."/>
            <person name="Grymonprez B."/>
            <person name="Weltjens I."/>
            <person name="Vanstreels E."/>
            <person name="Rieger M."/>
            <person name="Schaefer M."/>
            <person name="Mueller-Auer S."/>
            <person name="Gabel C."/>
            <person name="Fuchs M."/>
            <person name="Duesterhoeft A."/>
            <person name="Fritzc C."/>
            <person name="Holzer E."/>
            <person name="Moestl D."/>
            <person name="Hilbert H."/>
            <person name="Borzym K."/>
            <person name="Langer I."/>
            <person name="Beck A."/>
            <person name="Lehrach H."/>
            <person name="Reinhardt R."/>
            <person name="Pohl T.M."/>
            <person name="Eger P."/>
            <person name="Zimmermann W."/>
            <person name="Wedler H."/>
            <person name="Wambutt R."/>
            <person name="Purnelle B."/>
            <person name="Goffeau A."/>
            <person name="Cadieu E."/>
            <person name="Dreano S."/>
            <person name="Gloux S."/>
            <person name="Lelaure V."/>
            <person name="Mottier S."/>
            <person name="Galibert F."/>
            <person name="Aves S.J."/>
            <person name="Xiang Z."/>
            <person name="Hunt C."/>
            <person name="Moore K."/>
            <person name="Hurst S.M."/>
            <person name="Lucas M."/>
            <person name="Rochet M."/>
            <person name="Gaillardin C."/>
            <person name="Tallada V.A."/>
            <person name="Garzon A."/>
            <person name="Thode G."/>
            <person name="Daga R.R."/>
            <person name="Cruzado L."/>
            <person name="Jimenez J."/>
            <person name="Sanchez M."/>
            <person name="del Rey F."/>
            <person name="Benito J."/>
            <person name="Dominguez A."/>
            <person name="Revuelta J.L."/>
            <person name="Moreno S."/>
            <person name="Armstrong J."/>
            <person name="Forsburg S.L."/>
            <person name="Cerutti L."/>
            <person name="Lowe T."/>
            <person name="McCombie W.R."/>
            <person name="Paulsen I."/>
            <person name="Potashkin J."/>
            <person name="Shpakovski G.V."/>
            <person name="Ussery D."/>
            <person name="Barrell B.G."/>
            <person name="Nurse P."/>
        </authorList>
    </citation>
    <scope>NUCLEOTIDE SEQUENCE [LARGE SCALE GENOMIC DNA]</scope>
    <source>
        <strain>972 / ATCC 24843</strain>
    </source>
</reference>
<reference key="2">
    <citation type="journal article" date="2006" name="Nat. Biotechnol.">
        <title>ORFeome cloning and global analysis of protein localization in the fission yeast Schizosaccharomyces pombe.</title>
        <authorList>
            <person name="Matsuyama A."/>
            <person name="Arai R."/>
            <person name="Yashiroda Y."/>
            <person name="Shirai A."/>
            <person name="Kamata A."/>
            <person name="Sekido S."/>
            <person name="Kobayashi Y."/>
            <person name="Hashimoto A."/>
            <person name="Hamamoto M."/>
            <person name="Hiraoka Y."/>
            <person name="Horinouchi S."/>
            <person name="Yoshida M."/>
        </authorList>
    </citation>
    <scope>SUBCELLULAR LOCATION [LARGE SCALE ANALYSIS]</scope>
</reference>
<protein>
    <recommendedName>
        <fullName>Uncharacterized urease accessory protein ureG-like</fullName>
    </recommendedName>
</protein>
<name>UREG_SCHPO</name>